<keyword id="KW-0002">3D-structure</keyword>
<keyword id="KW-1064">Adaptive immunity</keyword>
<keyword id="KW-1003">Cell membrane</keyword>
<keyword id="KW-1015">Disulfide bond</keyword>
<keyword id="KW-0325">Glycoprotein</keyword>
<keyword id="KW-0391">Immunity</keyword>
<keyword id="KW-0393">Immunoglobulin domain</keyword>
<keyword id="KW-0472">Membrane</keyword>
<keyword id="KW-0675">Receptor</keyword>
<keyword id="KW-1185">Reference proteome</keyword>
<keyword id="KW-1279">T cell receptor</keyword>
<keyword id="KW-0812">Transmembrane</keyword>
<keyword id="KW-1133">Transmembrane helix</keyword>
<sequence length="173" mass="19804">DKQLDADVSPKPTIFLPSIAETKLQKAGTYLCLLEKFFPDVIKIHWQEKKSNTILGSQEGNTMKTNDTYMKFSWLTVPEKSLDKEHRCIVRHENNKNGVDQEIIFPPIKTDVITMDPKDNCSKDANDTLLLQLTNTSAYYMYLLLLLKSVVYFAIITCCLLRRTAFCCNGEKS</sequence>
<organism>
    <name type="scientific">Homo sapiens</name>
    <name type="common">Human</name>
    <dbReference type="NCBI Taxonomy" id="9606"/>
    <lineage>
        <taxon>Eukaryota</taxon>
        <taxon>Metazoa</taxon>
        <taxon>Chordata</taxon>
        <taxon>Craniata</taxon>
        <taxon>Vertebrata</taxon>
        <taxon>Euteleostomi</taxon>
        <taxon>Mammalia</taxon>
        <taxon>Eutheria</taxon>
        <taxon>Euarchontoglires</taxon>
        <taxon>Primates</taxon>
        <taxon>Haplorrhini</taxon>
        <taxon>Catarrhini</taxon>
        <taxon>Hominidae</taxon>
        <taxon>Homo</taxon>
    </lineage>
</organism>
<accession>P0CF51</accession>
<accession>A0A075B6Q9</accession>
<feature type="chain" id="PRO_0000393472" description="T cell receptor gamma constant 1">
    <location>
        <begin position="1" status="less than"/>
        <end position="173"/>
    </location>
</feature>
<feature type="transmembrane region" description="Helical" evidence="1">
    <location>
        <begin position="139"/>
        <end position="161"/>
    </location>
</feature>
<feature type="domain" description="Ig-like" evidence="2">
    <location>
        <begin position="10"/>
        <end position="104"/>
    </location>
</feature>
<feature type="glycosylation site" description="N-linked (GlcNAc...) asparagine" evidence="3">
    <location>
        <position position="66"/>
    </location>
</feature>
<feature type="glycosylation site" description="N-linked (GlcNAc...) asparagine" evidence="3">
    <location>
        <position position="120"/>
    </location>
</feature>
<feature type="glycosylation site" description="N-linked (GlcNAc...) asparagine" evidence="3">
    <location>
        <position position="126"/>
    </location>
</feature>
<feature type="glycosylation site" description="N-linked (GlcNAc...) asparagine" evidence="3">
    <location>
        <position position="135"/>
    </location>
</feature>
<feature type="disulfide bond" evidence="2">
    <location>
        <begin position="32"/>
        <end position="88"/>
    </location>
</feature>
<feature type="non-terminal residue">
    <location>
        <position position="1"/>
    </location>
</feature>
<feature type="strand" evidence="14">
    <location>
        <begin position="11"/>
        <end position="15"/>
    </location>
</feature>
<feature type="helix" evidence="14">
    <location>
        <begin position="19"/>
        <end position="25"/>
    </location>
</feature>
<feature type="strand" evidence="14">
    <location>
        <begin position="26"/>
        <end position="40"/>
    </location>
</feature>
<feature type="strand" evidence="14">
    <location>
        <begin position="43"/>
        <end position="48"/>
    </location>
</feature>
<feature type="strand" evidence="15">
    <location>
        <begin position="49"/>
        <end position="51"/>
    </location>
</feature>
<feature type="strand" evidence="14">
    <location>
        <begin position="63"/>
        <end position="65"/>
    </location>
</feature>
<feature type="strand" evidence="14">
    <location>
        <begin position="68"/>
        <end position="78"/>
    </location>
</feature>
<feature type="helix" evidence="14">
    <location>
        <begin position="79"/>
        <end position="81"/>
    </location>
</feature>
<feature type="strand" evidence="15">
    <location>
        <begin position="82"/>
        <end position="84"/>
    </location>
</feature>
<feature type="strand" evidence="14">
    <location>
        <begin position="86"/>
        <end position="91"/>
    </location>
</feature>
<feature type="helix" evidence="14">
    <location>
        <begin position="96"/>
        <end position="98"/>
    </location>
</feature>
<feature type="strand" evidence="14">
    <location>
        <begin position="101"/>
        <end position="105"/>
    </location>
</feature>
<feature type="helix" evidence="16">
    <location>
        <begin position="129"/>
        <end position="164"/>
    </location>
</feature>
<comment type="function">
    <text evidence="4 5 6 7 8">Constant region of T cell receptor (TR) gamma chain that participates in the antigen recognition (PubMed:24600447). Gamma-delta TRs recognize a variety of self and foreign non-peptide antigens frequently expressed at the epithelial boundaries between the host and external environment, including endogenous lipids presented by MH-like protein CD1D and phosphoantigens presented by butyrophilin-like molecule BTN3A1. Upon antigen recognition induces rapid, innate-like immune responses involved in pathogen clearance and tissue repair (PubMed:23348415, PubMed:28920588). Binding of gamma-delta TR complex to antigen triggers phosphorylation of immunoreceptor tyrosine-based activation motifs (ITAMs) in the CD3 chains by the LCK and FYN kinases, allowing the recruitment, phosphorylation, and activation of ZAP70 that facilitates phosphorylation of the scaffolding proteins LCP2 and LAT. This lead to the formation of a supramolecular signalosome that recruits the phospholipase PLCG1, resulting in calcium mobilization and ERK activation, ultimately leading to T cell expansion and differentiation into effector cells (PubMed:25674089). Gamma-delta TRs are produced through somatic rearrangement of a limited repertoire of variable (V), diversity (D), and joining (J) genes. The potential diversity of gamma-delta TRs is conferred by the unique ability to rearrange (D) genes in tandem and to utilize all three reading frames. The combinatorial diversity is considerably increased by the sequence exonuclease trimming and random nucleotide (N) region additions which occur during the V-(D)-J rearrangements (PubMed:24387714).</text>
</comment>
<comment type="subunit">
    <text evidence="7">Gamma-delta TR is a heterodimer composed of a gamma and delta chain; disulfide-linked. The gamma-delta TR is associated with the transmembrane signaling CD3 coreceptor proteins following the stoichiometry: a single gamma-delta TR heterodimer associates with one CD3D-CD3E heterodimer, one CD3G-CD3E heterodimer and one CD247 homodimer forming a stable octameric structure. Upon activation, gamma-delta TR complex associates with FCER1G to initiate intracellular signaling.</text>
</comment>
<comment type="subcellular location">
    <subcellularLocation>
        <location evidence="10">Cell membrane</location>
    </subcellularLocation>
</comment>
<comment type="polymorphism">
    <text evidence="10">There are several alleles. The sequence shown is that of IMGT allele TRGC1*01.</text>
</comment>
<protein>
    <recommendedName>
        <fullName evidence="9">T cell receptor gamma constant 1</fullName>
    </recommendedName>
</protein>
<dbReference type="EMBL" id="M14998">
    <property type="protein sequence ID" value="AAA75392.1"/>
    <property type="molecule type" value="Genomic_DNA"/>
</dbReference>
<dbReference type="EMBL" id="M14996">
    <property type="protein sequence ID" value="AAA75392.1"/>
    <property type="status" value="JOINED"/>
    <property type="molecule type" value="Genomic_DNA"/>
</dbReference>
<dbReference type="EMBL" id="M14997">
    <property type="protein sequence ID" value="AAA75392.1"/>
    <property type="status" value="JOINED"/>
    <property type="molecule type" value="Genomic_DNA"/>
</dbReference>
<dbReference type="EMBL" id="AC006033">
    <property type="status" value="NOT_ANNOTATED_CDS"/>
    <property type="molecule type" value="Genomic_DNA"/>
</dbReference>
<dbReference type="PDB" id="4LFH">
    <property type="method" value="X-ray"/>
    <property type="resolution" value="2.30 A"/>
    <property type="chains" value="G=1-122"/>
</dbReference>
<dbReference type="PDB" id="4LHU">
    <property type="method" value="X-ray"/>
    <property type="resolution" value="2.87 A"/>
    <property type="chains" value="G=1-122"/>
</dbReference>
<dbReference type="PDB" id="8JBV">
    <property type="method" value="EM"/>
    <property type="resolution" value="3.02 A"/>
    <property type="chains" value="N/n=1-173"/>
</dbReference>
<dbReference type="PDB" id="8JC0">
    <property type="method" value="EM"/>
    <property type="resolution" value="3.40 A"/>
    <property type="chains" value="n=1-173"/>
</dbReference>
<dbReference type="PDB" id="8JCB">
    <property type="method" value="EM"/>
    <property type="resolution" value="9.50 A"/>
    <property type="chains" value="N/n=1-173"/>
</dbReference>
<dbReference type="PDB" id="8WXE">
    <property type="method" value="EM"/>
    <property type="resolution" value="4.00 A"/>
    <property type="chains" value="n=1-173"/>
</dbReference>
<dbReference type="PDB" id="8WY0">
    <property type="method" value="EM"/>
    <property type="resolution" value="3.80 A"/>
    <property type="chains" value="n=1-173"/>
</dbReference>
<dbReference type="PDB" id="8WYI">
    <property type="method" value="EM"/>
    <property type="resolution" value="3.90 A"/>
    <property type="chains" value="n=1-173"/>
</dbReference>
<dbReference type="PDB" id="8YC0">
    <property type="method" value="EM"/>
    <property type="resolution" value="4.12 A"/>
    <property type="chains" value="n=1-173"/>
</dbReference>
<dbReference type="PDB" id="9CI8">
    <property type="method" value="EM"/>
    <property type="resolution" value="3.01 A"/>
    <property type="chains" value="n=128-165"/>
</dbReference>
<dbReference type="PDB" id="9CIA">
    <property type="method" value="EM"/>
    <property type="resolution" value="3.39 A"/>
    <property type="chains" value="n=128-163"/>
</dbReference>
<dbReference type="PDBsum" id="4LFH"/>
<dbReference type="PDBsum" id="4LHU"/>
<dbReference type="PDBsum" id="8JBV"/>
<dbReference type="PDBsum" id="8JC0"/>
<dbReference type="PDBsum" id="8JCB"/>
<dbReference type="PDBsum" id="8WXE"/>
<dbReference type="PDBsum" id="8WY0"/>
<dbReference type="PDBsum" id="8WYI"/>
<dbReference type="PDBsum" id="8YC0"/>
<dbReference type="PDBsum" id="9CI8"/>
<dbReference type="PDBsum" id="9CIA"/>
<dbReference type="EMDB" id="EMD-36147"/>
<dbReference type="EMDB" id="EMD-36149"/>
<dbReference type="EMDB" id="EMD-36156"/>
<dbReference type="EMDB" id="EMD-37904"/>
<dbReference type="EMDB" id="EMD-37914"/>
<dbReference type="EMDB" id="EMD-37929"/>
<dbReference type="EMDB" id="EMD-39128"/>
<dbReference type="EMDB" id="EMD-45614"/>
<dbReference type="EMDB" id="EMD-45615"/>
<dbReference type="SMR" id="P0CF51"/>
<dbReference type="ComplexPortal" id="CPX-6582">
    <property type="entry name" value="Gamma-delta T cell receptor complex, TRGC1 variant"/>
</dbReference>
<dbReference type="FunCoup" id="P0CF51">
    <property type="interactions" value="46"/>
</dbReference>
<dbReference type="IMGT_GENE-DB" id="TRGC1"/>
<dbReference type="GlyCosmos" id="P0CF51">
    <property type="glycosylation" value="4 sites, No reported glycans"/>
</dbReference>
<dbReference type="GlyGen" id="P0CF51">
    <property type="glycosylation" value="4 sites"/>
</dbReference>
<dbReference type="iPTMnet" id="P0CF51"/>
<dbReference type="PhosphoSitePlus" id="P0CF51"/>
<dbReference type="SwissPalm" id="P0CF51"/>
<dbReference type="BioMuta" id="TRGC1"/>
<dbReference type="PeptideAtlas" id="P0CF51"/>
<dbReference type="ProteomicsDB" id="52442"/>
<dbReference type="UCSC" id="uc064cxn.1">
    <property type="organism name" value="human"/>
</dbReference>
<dbReference type="AGR" id="HGNC:12275"/>
<dbReference type="GeneCards" id="TRGC1"/>
<dbReference type="HGNC" id="HGNC:12275">
    <property type="gene designation" value="TRGC1"/>
</dbReference>
<dbReference type="MalaCards" id="TRGC1"/>
<dbReference type="MIM" id="186970">
    <property type="type" value="gene"/>
</dbReference>
<dbReference type="neXtProt" id="NX_P0CF51"/>
<dbReference type="HOGENOM" id="CLU_077975_3_2_1"/>
<dbReference type="InParanoid" id="P0CF51"/>
<dbReference type="OrthoDB" id="8924181at2759"/>
<dbReference type="PAN-GO" id="P0CF51">
    <property type="GO annotations" value="1 GO annotation based on evolutionary models"/>
</dbReference>
<dbReference type="PhylomeDB" id="P0CF51"/>
<dbReference type="SignaLink" id="P0CF51"/>
<dbReference type="EvolutionaryTrace" id="P0CF51"/>
<dbReference type="Pharos" id="P0CF51">
    <property type="development level" value="Tdark"/>
</dbReference>
<dbReference type="Proteomes" id="UP000005640">
    <property type="component" value="Unplaced"/>
</dbReference>
<dbReference type="RNAct" id="P0CF51">
    <property type="molecule type" value="protein"/>
</dbReference>
<dbReference type="GO" id="GO:0009897">
    <property type="term" value="C:external side of plasma membrane"/>
    <property type="evidence" value="ECO:0000318"/>
    <property type="project" value="GO_Central"/>
</dbReference>
<dbReference type="GO" id="GO:0042106">
    <property type="term" value="C:gamma-delta T cell receptor complex"/>
    <property type="evidence" value="ECO:0000303"/>
    <property type="project" value="ComplexPortal"/>
</dbReference>
<dbReference type="GO" id="GO:0005886">
    <property type="term" value="C:plasma membrane"/>
    <property type="evidence" value="ECO:0000303"/>
    <property type="project" value="ComplexPortal"/>
</dbReference>
<dbReference type="GO" id="GO:0036094">
    <property type="term" value="F:small molecule binding"/>
    <property type="evidence" value="ECO:0000269"/>
    <property type="project" value="DisProt"/>
</dbReference>
<dbReference type="GO" id="GO:0002250">
    <property type="term" value="P:adaptive immune response"/>
    <property type="evidence" value="ECO:0000303"/>
    <property type="project" value="ComplexPortal"/>
</dbReference>
<dbReference type="GO" id="GO:0046629">
    <property type="term" value="P:gamma-delta T cell activation"/>
    <property type="evidence" value="ECO:0000303"/>
    <property type="project" value="ComplexPortal"/>
</dbReference>
<dbReference type="GO" id="GO:0050852">
    <property type="term" value="P:T cell receptor signaling pathway"/>
    <property type="evidence" value="ECO:0000303"/>
    <property type="project" value="ComplexPortal"/>
</dbReference>
<dbReference type="CDD" id="cd07697">
    <property type="entry name" value="IgC1_TCR_gamma"/>
    <property type="match status" value="1"/>
</dbReference>
<dbReference type="DisProt" id="DP01967"/>
<dbReference type="FunFam" id="2.60.40.10:FF:001083">
    <property type="entry name" value="T cell receptor gamma constant 2"/>
    <property type="match status" value="1"/>
</dbReference>
<dbReference type="Gene3D" id="2.60.40.10">
    <property type="entry name" value="Immunoglobulins"/>
    <property type="match status" value="1"/>
</dbReference>
<dbReference type="InterPro" id="IPR007110">
    <property type="entry name" value="Ig-like_dom"/>
</dbReference>
<dbReference type="InterPro" id="IPR036179">
    <property type="entry name" value="Ig-like_dom_sf"/>
</dbReference>
<dbReference type="InterPro" id="IPR013783">
    <property type="entry name" value="Ig-like_fold"/>
</dbReference>
<dbReference type="InterPro" id="IPR003597">
    <property type="entry name" value="Ig_C1-set"/>
</dbReference>
<dbReference type="InterPro" id="IPR051117">
    <property type="entry name" value="TRG_var/const_region"/>
</dbReference>
<dbReference type="PANTHER" id="PTHR19256:SF65">
    <property type="entry name" value="T CELL RECEPTOR GAMMA CONSTANT 1-RELATED"/>
    <property type="match status" value="1"/>
</dbReference>
<dbReference type="PANTHER" id="PTHR19256">
    <property type="entry name" value="T-CELL RECEPTOR GAMMA CHAIN"/>
    <property type="match status" value="1"/>
</dbReference>
<dbReference type="Pfam" id="PF07654">
    <property type="entry name" value="C1-set"/>
    <property type="match status" value="1"/>
</dbReference>
<dbReference type="SMART" id="SM00407">
    <property type="entry name" value="IGc1"/>
    <property type="match status" value="1"/>
</dbReference>
<dbReference type="SUPFAM" id="SSF48726">
    <property type="entry name" value="Immunoglobulin"/>
    <property type="match status" value="1"/>
</dbReference>
<dbReference type="PROSITE" id="PS50835">
    <property type="entry name" value="IG_LIKE"/>
    <property type="match status" value="1"/>
</dbReference>
<evidence type="ECO:0000255" key="1"/>
<evidence type="ECO:0000255" key="2">
    <source>
        <dbReference type="PROSITE-ProRule" id="PRU00114"/>
    </source>
</evidence>
<evidence type="ECO:0000255" key="3">
    <source>
        <dbReference type="PROSITE-ProRule" id="PRU00498"/>
    </source>
</evidence>
<evidence type="ECO:0000303" key="4">
    <source>
    </source>
</evidence>
<evidence type="ECO:0000303" key="5">
    <source>
    </source>
</evidence>
<evidence type="ECO:0000303" key="6">
    <source>
    </source>
</evidence>
<evidence type="ECO:0000303" key="7">
    <source>
    </source>
</evidence>
<evidence type="ECO:0000303" key="8">
    <source>
    </source>
</evidence>
<evidence type="ECO:0000303" key="9">
    <source ref="3"/>
</evidence>
<evidence type="ECO:0000305" key="10"/>
<evidence type="ECO:0000312" key="11">
    <source>
        <dbReference type="HGNC" id="HGNC:12275"/>
    </source>
</evidence>
<evidence type="ECO:0007744" key="12">
    <source>
        <dbReference type="PDB" id="4LFH"/>
    </source>
</evidence>
<evidence type="ECO:0007744" key="13">
    <source>
        <dbReference type="PDB" id="4LHU"/>
    </source>
</evidence>
<evidence type="ECO:0007829" key="14">
    <source>
        <dbReference type="PDB" id="4LFH"/>
    </source>
</evidence>
<evidence type="ECO:0007829" key="15">
    <source>
        <dbReference type="PDB" id="4LHU"/>
    </source>
</evidence>
<evidence type="ECO:0007829" key="16">
    <source>
        <dbReference type="PDB" id="9CI8"/>
    </source>
</evidence>
<proteinExistence type="evidence at protein level"/>
<reference key="1">
    <citation type="journal article" date="1986" name="Proc. Natl. Acad. Sci. U.S.A.">
        <title>Genetic polymorphism and exon changes of the constant regions of the human T-cell rearranging gene gamma.</title>
        <authorList>
            <person name="Lefranc M.P."/>
            <person name="Forster A."/>
            <person name="Rabbitts T.H."/>
        </authorList>
    </citation>
    <scope>NUCLEOTIDE SEQUENCE [GENOMIC DNA] (IMGT ALLELE TRGC1*01)</scope>
</reference>
<reference key="2">
    <citation type="journal article" date="2003" name="Nature">
        <title>The DNA sequence of human chromosome 7.</title>
        <authorList>
            <person name="Hillier L.W."/>
            <person name="Fulton R.S."/>
            <person name="Fulton L.A."/>
            <person name="Graves T.A."/>
            <person name="Pepin K.H."/>
            <person name="Wagner-McPherson C."/>
            <person name="Layman D."/>
            <person name="Maas J."/>
            <person name="Jaeger S."/>
            <person name="Walker R."/>
            <person name="Wylie K."/>
            <person name="Sekhon M."/>
            <person name="Becker M.C."/>
            <person name="O'Laughlin M.D."/>
            <person name="Schaller M.E."/>
            <person name="Fewell G.A."/>
            <person name="Delehaunty K.D."/>
            <person name="Miner T.L."/>
            <person name="Nash W.E."/>
            <person name="Cordes M."/>
            <person name="Du H."/>
            <person name="Sun H."/>
            <person name="Edwards J."/>
            <person name="Bradshaw-Cordum H."/>
            <person name="Ali J."/>
            <person name="Andrews S."/>
            <person name="Isak A."/>
            <person name="Vanbrunt A."/>
            <person name="Nguyen C."/>
            <person name="Du F."/>
            <person name="Lamar B."/>
            <person name="Courtney L."/>
            <person name="Kalicki J."/>
            <person name="Ozersky P."/>
            <person name="Bielicki L."/>
            <person name="Scott K."/>
            <person name="Holmes A."/>
            <person name="Harkins R."/>
            <person name="Harris A."/>
            <person name="Strong C.M."/>
            <person name="Hou S."/>
            <person name="Tomlinson C."/>
            <person name="Dauphin-Kohlberg S."/>
            <person name="Kozlowicz-Reilly A."/>
            <person name="Leonard S."/>
            <person name="Rohlfing T."/>
            <person name="Rock S.M."/>
            <person name="Tin-Wollam A.-M."/>
            <person name="Abbott A."/>
            <person name="Minx P."/>
            <person name="Maupin R."/>
            <person name="Strowmatt C."/>
            <person name="Latreille P."/>
            <person name="Miller N."/>
            <person name="Johnson D."/>
            <person name="Murray J."/>
            <person name="Woessner J.P."/>
            <person name="Wendl M.C."/>
            <person name="Yang S.-P."/>
            <person name="Schultz B.R."/>
            <person name="Wallis J.W."/>
            <person name="Spieth J."/>
            <person name="Bieri T.A."/>
            <person name="Nelson J.O."/>
            <person name="Berkowicz N."/>
            <person name="Wohldmann P.E."/>
            <person name="Cook L.L."/>
            <person name="Hickenbotham M.T."/>
            <person name="Eldred J."/>
            <person name="Williams D."/>
            <person name="Bedell J.A."/>
            <person name="Mardis E.R."/>
            <person name="Clifton S.W."/>
            <person name="Chissoe S.L."/>
            <person name="Marra M.A."/>
            <person name="Raymond C."/>
            <person name="Haugen E."/>
            <person name="Gillett W."/>
            <person name="Zhou Y."/>
            <person name="James R."/>
            <person name="Phelps K."/>
            <person name="Iadanoto S."/>
            <person name="Bubb K."/>
            <person name="Simms E."/>
            <person name="Levy R."/>
            <person name="Clendenning J."/>
            <person name="Kaul R."/>
            <person name="Kent W.J."/>
            <person name="Furey T.S."/>
            <person name="Baertsch R.A."/>
            <person name="Brent M.R."/>
            <person name="Keibler E."/>
            <person name="Flicek P."/>
            <person name="Bork P."/>
            <person name="Suyama M."/>
            <person name="Bailey J.A."/>
            <person name="Portnoy M.E."/>
            <person name="Torrents D."/>
            <person name="Chinwalla A.T."/>
            <person name="Gish W.R."/>
            <person name="Eddy S.R."/>
            <person name="McPherson J.D."/>
            <person name="Olson M.V."/>
            <person name="Eichler E.E."/>
            <person name="Green E.D."/>
            <person name="Waterston R.H."/>
            <person name="Wilson R.K."/>
        </authorList>
    </citation>
    <scope>NUCLEOTIDE SEQUENCE [LARGE SCALE GENOMIC DNA] (IMGT ALLELE TRGC1*01)</scope>
</reference>
<reference key="3">
    <citation type="book" date="2001" name="The T Cell Receptor FactsBook.">
        <title>The T Cell Receptor FactsBook.</title>
        <editorList>
            <person name="Lefranc M.P."/>
            <person name="Lefranc G."/>
        </editorList>
        <authorList>
            <person name="Lefranc M.P."/>
            <person name="Lefranc G."/>
        </authorList>
    </citation>
    <scope>NOMENCLATURE</scope>
</reference>
<reference key="4">
    <citation type="journal article" date="2013" name="Nat. Rev. Immunol.">
        <title>Six-of-the-best: unique contributions of gammadelta T cells to immunology.</title>
        <authorList>
            <person name="Vantourout P."/>
            <person name="Hayday A."/>
        </authorList>
    </citation>
    <scope>REVIEW ON FUNCTION AND ANTIGEN RECOGNITION</scope>
</reference>
<reference key="5">
    <citation type="journal article" date="2014" name="Annu. Rev. Immunol.">
        <title>gammadelta T cells: first line of defense and beyond.</title>
        <authorList>
            <person name="Chien Y.H."/>
            <person name="Meyer C."/>
            <person name="Bonneville M."/>
        </authorList>
    </citation>
    <scope>REVIEW ON GAMMA DELTA T CELL RECEPTOR DIVERSITY</scope>
</reference>
<reference key="6">
    <citation type="journal article" date="2014" name="Front. Immunol.">
        <title>Immunoglobulin and T Cell Receptor Genes: IMGT((R)) and the Birth and Rise of Immunoinformatics.</title>
        <authorList>
            <person name="Lefranc M.P."/>
        </authorList>
    </citation>
    <scope>NOMENCLATURE</scope>
</reference>
<reference key="7">
    <citation type="journal article" date="2015" name="Front. Immunol.">
        <title>Five Layers of Receptor Signaling in gammadelta T-Cell Differentiation and Activation.</title>
        <authorList>
            <person name="Ribeiro S.T."/>
            <person name="Ribot J.C."/>
            <person name="Silva-Santos B."/>
        </authorList>
    </citation>
    <scope>REVIEW ON T CELL RECEPTOR SIGNALING</scope>
    <scope>SUBUNIT</scope>
</reference>
<reference key="8">
    <citation type="journal article" date="2017" name="Nat. Rev. Immunol.">
        <title>gammadelta T cells in homeostasis and host defence of epithelial barrier tissues.</title>
        <authorList>
            <person name="Nielsen M.M."/>
            <person name="Witherden D.A."/>
            <person name="Havran W.L."/>
        </authorList>
    </citation>
    <scope>REVIEW ON FUNCTION</scope>
</reference>
<reference evidence="12 13" key="9">
    <citation type="journal article" date="2013" name="Nat. Immunol.">
        <title>CD1d-lipid antigen recognition by the gammadelta TCR.</title>
        <authorList>
            <person name="Uldrich A.P."/>
            <person name="Le Nours J."/>
            <person name="Pellicci D.G."/>
            <person name="Gherardin N.A."/>
            <person name="McPherson K.G."/>
            <person name="Lim R.T."/>
            <person name="Patel O."/>
            <person name="Beddoe T."/>
            <person name="Gras S."/>
            <person name="Rossjohn J."/>
            <person name="Godfrey D.I."/>
        </authorList>
    </citation>
    <scope>X-RAY CRYSTALLOGRAPHY (2.30 ANGSTROMS) OF 1-122</scope>
</reference>
<name>TRGC1_HUMAN</name>
<gene>
    <name evidence="9" type="primary">TRGC1</name>
    <name evidence="11" type="synonym">TCRGC1</name>
</gene>